<proteinExistence type="evidence at protein level"/>
<sequence length="243" mass="27937">MQFQLFSFVLIILNCVDYSHCQANRWRRSKRASYGTNPICKGCLSCSKDNGCLRCQPKLFFYLRREGMRQYGECLQSCPPGYYGVRGPDMNRCSRCRIENCDSCFSRDFCIKCKSGFYSHKGQCFEECPEGFAPLDDTMVCVDGCEVGPWSEWGTCSRNNRTCGFKWGLETRTRQIVKKPAKDTIPCPTIAESRRCKMAMRHCPGGTRTTKKKDKKNKKKKKKLLERAQEQHSVVLATDRSSQ</sequence>
<name>RSPO2_XENTR</name>
<evidence type="ECO:0000250" key="1"/>
<evidence type="ECO:0000250" key="2">
    <source>
        <dbReference type="UniProtKB" id="Q5UE90"/>
    </source>
</evidence>
<evidence type="ECO:0000250" key="3">
    <source>
        <dbReference type="UniProtKB" id="Q6UXX9"/>
    </source>
</evidence>
<evidence type="ECO:0000250" key="4">
    <source>
        <dbReference type="UniProtKB" id="Q8BFU0"/>
    </source>
</evidence>
<evidence type="ECO:0000255" key="5"/>
<evidence type="ECO:0000255" key="6">
    <source>
        <dbReference type="PROSITE-ProRule" id="PRU00210"/>
    </source>
</evidence>
<evidence type="ECO:0000256" key="7">
    <source>
        <dbReference type="SAM" id="MobiDB-lite"/>
    </source>
</evidence>
<evidence type="ECO:0000269" key="8">
    <source>
    </source>
</evidence>
<evidence type="ECO:0000305" key="9"/>
<evidence type="ECO:0007829" key="10">
    <source>
        <dbReference type="PDB" id="4C8V"/>
    </source>
</evidence>
<evidence type="ECO:0007829" key="11">
    <source>
        <dbReference type="PDB" id="4C9R"/>
    </source>
</evidence>
<protein>
    <recommendedName>
        <fullName>R-spondin-2</fullName>
    </recommendedName>
    <alternativeName>
        <fullName>Roof plate-specific spondin-2</fullName>
    </alternativeName>
</protein>
<organism>
    <name type="scientific">Xenopus tropicalis</name>
    <name type="common">Western clawed frog</name>
    <name type="synonym">Silurana tropicalis</name>
    <dbReference type="NCBI Taxonomy" id="8364"/>
    <lineage>
        <taxon>Eukaryota</taxon>
        <taxon>Metazoa</taxon>
        <taxon>Chordata</taxon>
        <taxon>Craniata</taxon>
        <taxon>Vertebrata</taxon>
        <taxon>Euteleostomi</taxon>
        <taxon>Amphibia</taxon>
        <taxon>Batrachia</taxon>
        <taxon>Anura</taxon>
        <taxon>Pipoidea</taxon>
        <taxon>Pipidae</taxon>
        <taxon>Xenopodinae</taxon>
        <taxon>Xenopus</taxon>
        <taxon>Silurana</taxon>
    </lineage>
</organism>
<keyword id="KW-0002">3D-structure</keyword>
<keyword id="KW-0217">Developmental protein</keyword>
<keyword id="KW-1015">Disulfide bond</keyword>
<keyword id="KW-0325">Glycoprotein</keyword>
<keyword id="KW-0358">Heparin-binding</keyword>
<keyword id="KW-1185">Reference proteome</keyword>
<keyword id="KW-0964">Secreted</keyword>
<keyword id="KW-0716">Sensory transduction</keyword>
<keyword id="KW-0732">Signal</keyword>
<keyword id="KW-0879">Wnt signaling pathway</keyword>
<comment type="function">
    <text evidence="2 3 8">Activator of the canonical Wnt signaling pathway by acting as a ligand for lgr4-6 receptors. Upon binding to lgr4-6 (lgr4, lgr5 or lgr6), lgr4-6 associate with phosphorylated lrp6 and frizzled receptors that are activated by extracellular Wnt receptors, triggering the canonical Wnt signaling pathway to increase expression of target genes. Acts both in the canonical. Wnt/beta-catenin-dependent pathway and in non-canonical Wnt signaling pathway (By similarity). Activates neural markers and promotes muscle formation. Overexpression blocks activin, nodal and BMP4 signaling, suggesting that it may negatively regulate the TGF-beta pathway (By similarity). During embryonic development, plays a crucial role in limb specification, amplifying the Wnt signaling pathway independently of LGR4-6 receptors, possibly by acting as a direct antagonistic ligand to RNF43 and ZNRF3, hence governing the number of limbs an embryo should form (PubMed:29769720).</text>
</comment>
<comment type="subunit">
    <text evidence="4">Binds heparin.</text>
</comment>
<comment type="subcellular location">
    <subcellularLocation>
        <location evidence="2">Secreted</location>
    </subcellularLocation>
</comment>
<comment type="domain">
    <text evidence="1">The FU repeat is required for activation and stabilization of beta-catenin.</text>
</comment>
<comment type="disruption phenotype">
    <text evidence="8">Mutant animals exhibit marked forelimb and hindlimb amelia.</text>
</comment>
<comment type="similarity">
    <text evidence="9">Belongs to the R-spondin family.</text>
</comment>
<accession>Q5M7L6</accession>
<reference key="1">
    <citation type="submission" date="2004-12" db="EMBL/GenBank/DDBJ databases">
        <authorList>
            <consortium name="NIH - Xenopus Gene Collection (XGC) project"/>
        </authorList>
    </citation>
    <scope>NUCLEOTIDE SEQUENCE [LARGE SCALE MRNA]</scope>
    <source>
        <tissue>Embryo</tissue>
    </source>
</reference>
<reference key="2">
    <citation type="journal article" date="2018" name="Nature">
        <title>RSPO2 inhibition of RNF43 and ZNRF3 governs limb development independently of LGR4/5/6.</title>
        <authorList>
            <person name="Szenker-Ravi E."/>
            <person name="Altunoglu U."/>
            <person name="Leushacke M."/>
            <person name="Bosso-Lefevre C."/>
            <person name="Khatoo M."/>
            <person name="Thi Tran H."/>
            <person name="Naert T."/>
            <person name="Noelanders R."/>
            <person name="Hajamohideen A."/>
            <person name="Beneteau C."/>
            <person name="de Sousa S.B."/>
            <person name="Karaman B."/>
            <person name="Latypova X."/>
            <person name="Basaran S."/>
            <person name="Yuecel E.B."/>
            <person name="Tan T.T."/>
            <person name="Vlaminck L."/>
            <person name="Nayak S.S."/>
            <person name="Shukla A."/>
            <person name="Girisha K.M."/>
            <person name="Le Caignec C."/>
            <person name="Soshnikova N."/>
            <person name="Uyguner Z.O."/>
            <person name="Vleminckx K."/>
            <person name="Barker N."/>
            <person name="Kayserili H."/>
            <person name="Reversade B."/>
        </authorList>
    </citation>
    <scope>FUNCTION</scope>
    <scope>DISRUPTION PHENOTYPE</scope>
</reference>
<feature type="signal peptide" evidence="5">
    <location>
        <begin position="1"/>
        <end position="21"/>
    </location>
</feature>
<feature type="chain" id="PRO_0000234442" description="R-spondin-2">
    <location>
        <begin position="22"/>
        <end position="243"/>
    </location>
</feature>
<feature type="repeat" description="FU">
    <location>
        <begin position="90"/>
        <end position="134"/>
    </location>
</feature>
<feature type="domain" description="TSP type-1" evidence="6">
    <location>
        <begin position="144"/>
        <end position="204"/>
    </location>
</feature>
<feature type="region of interest" description="Disordered" evidence="7">
    <location>
        <begin position="202"/>
        <end position="243"/>
    </location>
</feature>
<feature type="compositionally biased region" description="Basic residues" evidence="7">
    <location>
        <begin position="209"/>
        <end position="224"/>
    </location>
</feature>
<feature type="glycosylation site" description="N-linked (GlcNAc...) asparagine" evidence="5">
    <location>
        <position position="160"/>
    </location>
</feature>
<feature type="disulfide bond" evidence="6">
    <location>
        <begin position="40"/>
        <end position="46"/>
    </location>
</feature>
<feature type="disulfide bond" evidence="6">
    <location>
        <begin position="43"/>
        <end position="52"/>
    </location>
</feature>
<feature type="disulfide bond" evidence="6">
    <location>
        <begin position="55"/>
        <end position="74"/>
    </location>
</feature>
<feature type="disulfide bond" evidence="6">
    <location>
        <begin position="78"/>
        <end position="93"/>
    </location>
</feature>
<feature type="disulfide bond" evidence="6">
    <location>
        <begin position="96"/>
        <end position="104"/>
    </location>
</feature>
<feature type="disulfide bond" evidence="6">
    <location>
        <begin position="101"/>
        <end position="110"/>
    </location>
</feature>
<feature type="disulfide bond" evidence="6">
    <location>
        <begin position="113"/>
        <end position="124"/>
    </location>
</feature>
<feature type="disulfide bond" evidence="6">
    <location>
        <begin position="128"/>
        <end position="141"/>
    </location>
</feature>
<feature type="disulfide bond" evidence="6">
    <location>
        <begin position="145"/>
        <end position="187"/>
    </location>
</feature>
<feature type="disulfide bond" evidence="6">
    <location>
        <begin position="156"/>
        <end position="163"/>
    </location>
</feature>
<feature type="disulfide bond" evidence="6">
    <location>
        <begin position="196"/>
        <end position="203"/>
    </location>
</feature>
<feature type="strand" evidence="11">
    <location>
        <begin position="43"/>
        <end position="47"/>
    </location>
</feature>
<feature type="turn" evidence="11">
    <location>
        <begin position="48"/>
        <end position="50"/>
    </location>
</feature>
<feature type="strand" evidence="11">
    <location>
        <begin position="51"/>
        <end position="55"/>
    </location>
</feature>
<feature type="strand" evidence="11">
    <location>
        <begin position="59"/>
        <end position="66"/>
    </location>
</feature>
<feature type="strand" evidence="11">
    <location>
        <begin position="69"/>
        <end position="77"/>
    </location>
</feature>
<feature type="strand" evidence="11">
    <location>
        <begin position="82"/>
        <end position="86"/>
    </location>
</feature>
<feature type="strand" evidence="11">
    <location>
        <begin position="91"/>
        <end position="95"/>
    </location>
</feature>
<feature type="strand" evidence="11">
    <location>
        <begin position="101"/>
        <end position="106"/>
    </location>
</feature>
<feature type="strand" evidence="11">
    <location>
        <begin position="109"/>
        <end position="113"/>
    </location>
</feature>
<feature type="strand" evidence="11">
    <location>
        <begin position="118"/>
        <end position="120"/>
    </location>
</feature>
<feature type="strand" evidence="11">
    <location>
        <begin position="123"/>
        <end position="127"/>
    </location>
</feature>
<feature type="strand" evidence="10">
    <location>
        <begin position="132"/>
        <end position="135"/>
    </location>
</feature>
<feature type="strand" evidence="11">
    <location>
        <begin position="138"/>
        <end position="142"/>
    </location>
</feature>
<gene>
    <name type="primary">rspo2</name>
</gene>
<dbReference type="EMBL" id="BC088569">
    <property type="protein sequence ID" value="AAH88569.1"/>
    <property type="molecule type" value="mRNA"/>
</dbReference>
<dbReference type="RefSeq" id="NP_001011386.1">
    <property type="nucleotide sequence ID" value="NM_001011386.1"/>
</dbReference>
<dbReference type="RefSeq" id="XP_012820077.1">
    <property type="nucleotide sequence ID" value="XM_012964623.3"/>
</dbReference>
<dbReference type="PDB" id="4C8V">
    <property type="method" value="X-ray"/>
    <property type="resolution" value="2.20 A"/>
    <property type="chains" value="A/B/C/D/E/F/G/H=35-144"/>
</dbReference>
<dbReference type="PDB" id="4C8W">
    <property type="method" value="X-ray"/>
    <property type="resolution" value="3.10 A"/>
    <property type="chains" value="I/J=35-144"/>
</dbReference>
<dbReference type="PDB" id="4C9A">
    <property type="method" value="X-ray"/>
    <property type="resolution" value="2.40 A"/>
    <property type="chains" value="B/D=35-144"/>
</dbReference>
<dbReference type="PDB" id="4C9E">
    <property type="method" value="X-ray"/>
    <property type="resolution" value="3.00 A"/>
    <property type="chains" value="B/D/F/H=35-144"/>
</dbReference>
<dbReference type="PDB" id="4C9R">
    <property type="method" value="X-ray"/>
    <property type="resolution" value="2.10 A"/>
    <property type="chains" value="B/D=35-144"/>
</dbReference>
<dbReference type="PDB" id="4C9U">
    <property type="method" value="X-ray"/>
    <property type="resolution" value="3.00 A"/>
    <property type="chains" value="B/D=35-144"/>
</dbReference>
<dbReference type="PDB" id="4C9V">
    <property type="method" value="X-ray"/>
    <property type="resolution" value="2.70 A"/>
    <property type="chains" value="B=35-144"/>
</dbReference>
<dbReference type="PDBsum" id="4C8V"/>
<dbReference type="PDBsum" id="4C8W"/>
<dbReference type="PDBsum" id="4C9A"/>
<dbReference type="PDBsum" id="4C9E"/>
<dbReference type="PDBsum" id="4C9R"/>
<dbReference type="PDBsum" id="4C9U"/>
<dbReference type="PDBsum" id="4C9V"/>
<dbReference type="SMR" id="Q5M7L6"/>
<dbReference type="FunCoup" id="Q5M7L6">
    <property type="interactions" value="336"/>
</dbReference>
<dbReference type="STRING" id="8364.ENSXETP00000022530"/>
<dbReference type="GlyCosmos" id="Q5M7L6">
    <property type="glycosylation" value="1 site, No reported glycans"/>
</dbReference>
<dbReference type="PaxDb" id="8364-ENSXETP00000063896"/>
<dbReference type="DNASU" id="496854"/>
<dbReference type="GeneID" id="496854"/>
<dbReference type="KEGG" id="xtr:496854"/>
<dbReference type="AGR" id="Xenbase:XB-GENE-946235"/>
<dbReference type="CTD" id="340419"/>
<dbReference type="Xenbase" id="XB-GENE-946235">
    <property type="gene designation" value="rspo2"/>
</dbReference>
<dbReference type="eggNOG" id="KOG3525">
    <property type="taxonomic scope" value="Eukaryota"/>
</dbReference>
<dbReference type="HOGENOM" id="CLU_064219_1_0_1"/>
<dbReference type="InParanoid" id="Q5M7L6"/>
<dbReference type="OMA" id="HGECLHA"/>
<dbReference type="OrthoDB" id="10257656at2759"/>
<dbReference type="PhylomeDB" id="Q5M7L6"/>
<dbReference type="TreeFam" id="TF331799"/>
<dbReference type="Reactome" id="R-XTR-4641263">
    <property type="pathway name" value="Regulation of FZD by ubiquitination"/>
</dbReference>
<dbReference type="EvolutionaryTrace" id="Q5M7L6"/>
<dbReference type="Proteomes" id="UP000008143">
    <property type="component" value="Chromosome 6"/>
</dbReference>
<dbReference type="Bgee" id="ENSXETG00000003600">
    <property type="expression patterns" value="Expressed in gastrula and 7 other cell types or tissues"/>
</dbReference>
<dbReference type="GO" id="GO:0005615">
    <property type="term" value="C:extracellular space"/>
    <property type="evidence" value="ECO:0000304"/>
    <property type="project" value="Xenbase"/>
</dbReference>
<dbReference type="GO" id="GO:0005764">
    <property type="term" value="C:lysosome"/>
    <property type="evidence" value="ECO:0007669"/>
    <property type="project" value="GOC"/>
</dbReference>
<dbReference type="GO" id="GO:0070700">
    <property type="term" value="F:BMP receptor binding"/>
    <property type="evidence" value="ECO:0000314"/>
    <property type="project" value="Xenbase"/>
</dbReference>
<dbReference type="GO" id="GO:0008201">
    <property type="term" value="F:heparin binding"/>
    <property type="evidence" value="ECO:0007669"/>
    <property type="project" value="UniProtKB-KW"/>
</dbReference>
<dbReference type="GO" id="GO:0033335">
    <property type="term" value="P:anal fin development"/>
    <property type="evidence" value="ECO:0007669"/>
    <property type="project" value="Ensembl"/>
</dbReference>
<dbReference type="GO" id="GO:0030509">
    <property type="term" value="P:BMP signaling pathway"/>
    <property type="evidence" value="ECO:0000315"/>
    <property type="project" value="Xenbase"/>
</dbReference>
<dbReference type="GO" id="GO:0033336">
    <property type="term" value="P:caudal fin development"/>
    <property type="evidence" value="ECO:0007669"/>
    <property type="project" value="Ensembl"/>
</dbReference>
<dbReference type="GO" id="GO:0033337">
    <property type="term" value="P:dorsal fin development"/>
    <property type="evidence" value="ECO:0007669"/>
    <property type="project" value="Ensembl"/>
</dbReference>
<dbReference type="GO" id="GO:0009950">
    <property type="term" value="P:dorsal/ventral axis specification"/>
    <property type="evidence" value="ECO:0000315"/>
    <property type="project" value="Xenbase"/>
</dbReference>
<dbReference type="GO" id="GO:1905146">
    <property type="term" value="P:lysosomal protein catabolic process"/>
    <property type="evidence" value="ECO:0000304"/>
    <property type="project" value="Xenbase"/>
</dbReference>
<dbReference type="GO" id="GO:0030514">
    <property type="term" value="P:negative regulation of BMP signaling pathway"/>
    <property type="evidence" value="ECO:0000314"/>
    <property type="project" value="Xenbase"/>
</dbReference>
<dbReference type="GO" id="GO:0033339">
    <property type="term" value="P:pectoral fin development"/>
    <property type="evidence" value="ECO:0007669"/>
    <property type="project" value="Ensembl"/>
</dbReference>
<dbReference type="GO" id="GO:0033340">
    <property type="term" value="P:pelvic fin development"/>
    <property type="evidence" value="ECO:0007669"/>
    <property type="project" value="Ensembl"/>
</dbReference>
<dbReference type="GO" id="GO:0001501">
    <property type="term" value="P:skeletal system development"/>
    <property type="evidence" value="ECO:0007669"/>
    <property type="project" value="Ensembl"/>
</dbReference>
<dbReference type="GO" id="GO:0016055">
    <property type="term" value="P:Wnt signaling pathway"/>
    <property type="evidence" value="ECO:0007669"/>
    <property type="project" value="UniProtKB-KW"/>
</dbReference>
<dbReference type="CDD" id="cd00064">
    <property type="entry name" value="FU"/>
    <property type="match status" value="1"/>
</dbReference>
<dbReference type="FunFam" id="2.20.100.10:FF:000028">
    <property type="entry name" value="R-spondin 2"/>
    <property type="match status" value="1"/>
</dbReference>
<dbReference type="FunFam" id="2.10.220.10:FF:000012">
    <property type="entry name" value="R-spondin 4"/>
    <property type="match status" value="1"/>
</dbReference>
<dbReference type="Gene3D" id="2.10.220.10">
    <property type="entry name" value="Hormone Receptor, Insulin-like Growth Factor Receptor 1, Chain A, domain 2"/>
    <property type="match status" value="1"/>
</dbReference>
<dbReference type="Gene3D" id="2.20.100.10">
    <property type="entry name" value="Thrombospondin type-1 (TSP1) repeat"/>
    <property type="match status" value="1"/>
</dbReference>
<dbReference type="InterPro" id="IPR006212">
    <property type="entry name" value="Furin_repeat"/>
</dbReference>
<dbReference type="InterPro" id="IPR009030">
    <property type="entry name" value="Growth_fac_rcpt_cys_sf"/>
</dbReference>
<dbReference type="InterPro" id="IPR051514">
    <property type="entry name" value="R-spondin"/>
</dbReference>
<dbReference type="InterPro" id="IPR043601">
    <property type="entry name" value="Rspo_Fu-CRD_dom"/>
</dbReference>
<dbReference type="InterPro" id="IPR000884">
    <property type="entry name" value="TSP1_rpt"/>
</dbReference>
<dbReference type="InterPro" id="IPR036383">
    <property type="entry name" value="TSP1_rpt_sf"/>
</dbReference>
<dbReference type="InterPro" id="IPR044004">
    <property type="entry name" value="TSP1_spondin_dom"/>
</dbReference>
<dbReference type="PANTHER" id="PTHR46987">
    <property type="entry name" value="NEUROHYPOPHYSIAL HORMONES, N-TERMINAL DOMAIN CONTAINING PROTEIN"/>
    <property type="match status" value="1"/>
</dbReference>
<dbReference type="PANTHER" id="PTHR46987:SF4">
    <property type="entry name" value="R-SPONDIN-2"/>
    <property type="match status" value="1"/>
</dbReference>
<dbReference type="Pfam" id="PF15913">
    <property type="entry name" value="Furin-like_2"/>
    <property type="match status" value="1"/>
</dbReference>
<dbReference type="Pfam" id="PF19028">
    <property type="entry name" value="TSP1_spondin"/>
    <property type="match status" value="1"/>
</dbReference>
<dbReference type="SMART" id="SM00261">
    <property type="entry name" value="FU"/>
    <property type="match status" value="2"/>
</dbReference>
<dbReference type="SMART" id="SM00209">
    <property type="entry name" value="TSP1"/>
    <property type="match status" value="1"/>
</dbReference>
<dbReference type="SUPFAM" id="SSF57184">
    <property type="entry name" value="Growth factor receptor domain"/>
    <property type="match status" value="1"/>
</dbReference>
<dbReference type="SUPFAM" id="SSF82895">
    <property type="entry name" value="TSP-1 type 1 repeat"/>
    <property type="match status" value="1"/>
</dbReference>
<dbReference type="PROSITE" id="PS50092">
    <property type="entry name" value="TSP1"/>
    <property type="match status" value="1"/>
</dbReference>